<comment type="function">
    <text evidence="1">Catalyzes the production of L-lysyl-tRNA(Lys)transfer and the transfer of a lysyl group from L-lysyl-tRNA(Lys) to membrane-bound phosphatidylglycerol (PG), which produces lysylphosphatidylglycerol (LPG), one of the components of the bacterial membrane with a positive net charge. LPG synthesis contributes to the resistance to cationic antimicrobial peptides (CAMPs) and likely protects M.tuberculosis against the CAMPs produced by competiting microorganisms (bacteriocins). In fact, the modification of anionic phosphatidylglycerol with positively charged L-lysine results in repulsion of the peptides (By similarity).</text>
</comment>
<comment type="catalytic activity">
    <reaction>
        <text>tRNA(Lys) + L-lysine + ATP = L-lysyl-tRNA(Lys) + AMP + diphosphate</text>
        <dbReference type="Rhea" id="RHEA:20792"/>
        <dbReference type="Rhea" id="RHEA-COMP:9696"/>
        <dbReference type="Rhea" id="RHEA-COMP:9697"/>
        <dbReference type="ChEBI" id="CHEBI:30616"/>
        <dbReference type="ChEBI" id="CHEBI:32551"/>
        <dbReference type="ChEBI" id="CHEBI:33019"/>
        <dbReference type="ChEBI" id="CHEBI:78442"/>
        <dbReference type="ChEBI" id="CHEBI:78529"/>
        <dbReference type="ChEBI" id="CHEBI:456215"/>
        <dbReference type="EC" id="6.1.1.6"/>
    </reaction>
</comment>
<comment type="catalytic activity">
    <reaction>
        <text>L-lysyl-tRNA(Lys) + a 1,2-diacyl-sn-glycero-3-phospho-(1'-sn-glycerol) = a 1,2-diacyl-sn-glycero-3-phospho-1'-(3'-O-L-lysyl)-sn-glycerol + tRNA(Lys)</text>
        <dbReference type="Rhea" id="RHEA:10668"/>
        <dbReference type="Rhea" id="RHEA-COMP:9696"/>
        <dbReference type="Rhea" id="RHEA-COMP:9697"/>
        <dbReference type="ChEBI" id="CHEBI:64716"/>
        <dbReference type="ChEBI" id="CHEBI:75792"/>
        <dbReference type="ChEBI" id="CHEBI:78442"/>
        <dbReference type="ChEBI" id="CHEBI:78529"/>
        <dbReference type="EC" id="2.3.2.3"/>
    </reaction>
</comment>
<comment type="cofactor">
    <cofactor evidence="1">
        <name>Mg(2+)</name>
        <dbReference type="ChEBI" id="CHEBI:18420"/>
    </cofactor>
    <text evidence="1">Binds 3 Mg(2+) ions per subunit.</text>
</comment>
<comment type="subcellular location">
    <subcellularLocation>
        <location evidence="3">Cell membrane</location>
        <topology evidence="3">Multi-pass membrane protein</topology>
    </subcellularLocation>
</comment>
<comment type="similarity">
    <text evidence="3">In the N-terminal section; belongs to the LPG synthetase family.</text>
</comment>
<comment type="similarity">
    <text evidence="3">In the C-terminal section; belongs to the class-II aminoacyl-tRNA synthetase family.</text>
</comment>
<name>LYSX_MYCVP</name>
<reference key="1">
    <citation type="submission" date="2006-12" db="EMBL/GenBank/DDBJ databases">
        <title>Complete sequence of Mycobacterium vanbaalenii PYR-1.</title>
        <authorList>
            <consortium name="US DOE Joint Genome Institute"/>
            <person name="Copeland A."/>
            <person name="Lucas S."/>
            <person name="Lapidus A."/>
            <person name="Barry K."/>
            <person name="Detter J.C."/>
            <person name="Glavina del Rio T."/>
            <person name="Hammon N."/>
            <person name="Israni S."/>
            <person name="Dalin E."/>
            <person name="Tice H."/>
            <person name="Pitluck S."/>
            <person name="Singan V."/>
            <person name="Schmutz J."/>
            <person name="Larimer F."/>
            <person name="Land M."/>
            <person name="Hauser L."/>
            <person name="Kyrpides N."/>
            <person name="Anderson I.J."/>
            <person name="Miller C."/>
            <person name="Richardson P."/>
        </authorList>
    </citation>
    <scope>NUCLEOTIDE SEQUENCE [LARGE SCALE GENOMIC DNA]</scope>
    <source>
        <strain>DSM 7251 / JCM 13017 / BCRC 16820 / KCTC 9966 / NRRL B-24157 / PYR-1</strain>
    </source>
</reference>
<accession>A1TAC7</accession>
<dbReference type="EC" id="6.1.1.6"/>
<dbReference type="EC" id="2.3.2.3"/>
<dbReference type="EMBL" id="CP000511">
    <property type="protein sequence ID" value="ABM14127.1"/>
    <property type="molecule type" value="Genomic_DNA"/>
</dbReference>
<dbReference type="RefSeq" id="WP_011780532.1">
    <property type="nucleotide sequence ID" value="NC_008726.1"/>
</dbReference>
<dbReference type="SMR" id="A1TAC7"/>
<dbReference type="STRING" id="350058.Mvan_3330"/>
<dbReference type="KEGG" id="mva:Mvan_3330"/>
<dbReference type="eggNOG" id="COG1190">
    <property type="taxonomic scope" value="Bacteria"/>
</dbReference>
<dbReference type="eggNOG" id="COG2898">
    <property type="taxonomic scope" value="Bacteria"/>
</dbReference>
<dbReference type="HOGENOM" id="CLU_008255_2_0_11"/>
<dbReference type="Proteomes" id="UP000009159">
    <property type="component" value="Chromosome"/>
</dbReference>
<dbReference type="GO" id="GO:0005829">
    <property type="term" value="C:cytosol"/>
    <property type="evidence" value="ECO:0007669"/>
    <property type="project" value="TreeGrafter"/>
</dbReference>
<dbReference type="GO" id="GO:0005886">
    <property type="term" value="C:plasma membrane"/>
    <property type="evidence" value="ECO:0007669"/>
    <property type="project" value="UniProtKB-SubCell"/>
</dbReference>
<dbReference type="GO" id="GO:0005524">
    <property type="term" value="F:ATP binding"/>
    <property type="evidence" value="ECO:0007669"/>
    <property type="project" value="UniProtKB-UniRule"/>
</dbReference>
<dbReference type="GO" id="GO:0003677">
    <property type="term" value="F:DNA binding"/>
    <property type="evidence" value="ECO:0007669"/>
    <property type="project" value="UniProtKB-KW"/>
</dbReference>
<dbReference type="GO" id="GO:0004824">
    <property type="term" value="F:lysine-tRNA ligase activity"/>
    <property type="evidence" value="ECO:0007669"/>
    <property type="project" value="UniProtKB-UniRule"/>
</dbReference>
<dbReference type="GO" id="GO:0000287">
    <property type="term" value="F:magnesium ion binding"/>
    <property type="evidence" value="ECO:0007669"/>
    <property type="project" value="UniProtKB-UniRule"/>
</dbReference>
<dbReference type="GO" id="GO:0050071">
    <property type="term" value="F:phosphatidylglycerol lysyltransferase activity"/>
    <property type="evidence" value="ECO:0007669"/>
    <property type="project" value="UniProtKB-EC"/>
</dbReference>
<dbReference type="GO" id="GO:0000049">
    <property type="term" value="F:tRNA binding"/>
    <property type="evidence" value="ECO:0007669"/>
    <property type="project" value="TreeGrafter"/>
</dbReference>
<dbReference type="GO" id="GO:0006629">
    <property type="term" value="P:lipid metabolic process"/>
    <property type="evidence" value="ECO:0007669"/>
    <property type="project" value="UniProtKB-KW"/>
</dbReference>
<dbReference type="GO" id="GO:0006430">
    <property type="term" value="P:lysyl-tRNA aminoacylation"/>
    <property type="evidence" value="ECO:0007669"/>
    <property type="project" value="UniProtKB-UniRule"/>
</dbReference>
<dbReference type="GO" id="GO:0046677">
    <property type="term" value="P:response to antibiotic"/>
    <property type="evidence" value="ECO:0007669"/>
    <property type="project" value="UniProtKB-KW"/>
</dbReference>
<dbReference type="CDD" id="cd04322">
    <property type="entry name" value="LysRS_N"/>
    <property type="match status" value="1"/>
</dbReference>
<dbReference type="Gene3D" id="3.30.930.10">
    <property type="entry name" value="Bira Bifunctional Protein, Domain 2"/>
    <property type="match status" value="1"/>
</dbReference>
<dbReference type="Gene3D" id="2.40.50.140">
    <property type="entry name" value="Nucleic acid-binding proteins"/>
    <property type="match status" value="1"/>
</dbReference>
<dbReference type="HAMAP" id="MF_00252">
    <property type="entry name" value="Lys_tRNA_synth_class2"/>
    <property type="match status" value="1"/>
</dbReference>
<dbReference type="InterPro" id="IPR004364">
    <property type="entry name" value="Aa-tRNA-synt_II"/>
</dbReference>
<dbReference type="InterPro" id="IPR006195">
    <property type="entry name" value="aa-tRNA-synth_II"/>
</dbReference>
<dbReference type="InterPro" id="IPR045864">
    <property type="entry name" value="aa-tRNA-synth_II/BPL/LPL"/>
</dbReference>
<dbReference type="InterPro" id="IPR024320">
    <property type="entry name" value="LPG_synthase_C"/>
</dbReference>
<dbReference type="InterPro" id="IPR002313">
    <property type="entry name" value="Lys-tRNA-ligase_II"/>
</dbReference>
<dbReference type="InterPro" id="IPR044136">
    <property type="entry name" value="Lys-tRNA-ligase_II_N"/>
</dbReference>
<dbReference type="InterPro" id="IPR018149">
    <property type="entry name" value="Lys-tRNA-synth_II_C"/>
</dbReference>
<dbReference type="InterPro" id="IPR012340">
    <property type="entry name" value="NA-bd_OB-fold"/>
</dbReference>
<dbReference type="InterPro" id="IPR004365">
    <property type="entry name" value="NA-bd_OB_tRNA"/>
</dbReference>
<dbReference type="InterPro" id="IPR031553">
    <property type="entry name" value="tRNA-synt_2_TM"/>
</dbReference>
<dbReference type="NCBIfam" id="TIGR00499">
    <property type="entry name" value="lysS_bact"/>
    <property type="match status" value="1"/>
</dbReference>
<dbReference type="NCBIfam" id="NF001756">
    <property type="entry name" value="PRK00484.1"/>
    <property type="match status" value="1"/>
</dbReference>
<dbReference type="NCBIfam" id="NF002821">
    <property type="entry name" value="PRK02983.1"/>
    <property type="match status" value="1"/>
</dbReference>
<dbReference type="PANTHER" id="PTHR42918:SF15">
    <property type="entry name" value="LYSINE--TRNA LIGASE, CHLOROPLASTIC_MITOCHONDRIAL"/>
    <property type="match status" value="1"/>
</dbReference>
<dbReference type="PANTHER" id="PTHR42918">
    <property type="entry name" value="LYSYL-TRNA SYNTHETASE"/>
    <property type="match status" value="1"/>
</dbReference>
<dbReference type="Pfam" id="PF09924">
    <property type="entry name" value="LPG_synthase_C"/>
    <property type="match status" value="1"/>
</dbReference>
<dbReference type="Pfam" id="PF00152">
    <property type="entry name" value="tRNA-synt_2"/>
    <property type="match status" value="1"/>
</dbReference>
<dbReference type="Pfam" id="PF16995">
    <property type="entry name" value="tRNA-synt_2_TM"/>
    <property type="match status" value="1"/>
</dbReference>
<dbReference type="Pfam" id="PF01336">
    <property type="entry name" value="tRNA_anti-codon"/>
    <property type="match status" value="1"/>
</dbReference>
<dbReference type="PRINTS" id="PR00982">
    <property type="entry name" value="TRNASYNTHLYS"/>
</dbReference>
<dbReference type="SUPFAM" id="SSF55681">
    <property type="entry name" value="Class II aaRS and biotin synthetases"/>
    <property type="match status" value="1"/>
</dbReference>
<dbReference type="SUPFAM" id="SSF50249">
    <property type="entry name" value="Nucleic acid-binding proteins"/>
    <property type="match status" value="1"/>
</dbReference>
<dbReference type="PROSITE" id="PS50862">
    <property type="entry name" value="AA_TRNA_LIGASE_II"/>
    <property type="match status" value="1"/>
</dbReference>
<organism>
    <name type="scientific">Mycolicibacterium vanbaalenii (strain DSM 7251 / JCM 13017 / BCRC 16820 / KCTC 9966 / NRRL B-24157 / PYR-1)</name>
    <name type="common">Mycobacterium vanbaalenii</name>
    <dbReference type="NCBI Taxonomy" id="350058"/>
    <lineage>
        <taxon>Bacteria</taxon>
        <taxon>Bacillati</taxon>
        <taxon>Actinomycetota</taxon>
        <taxon>Actinomycetes</taxon>
        <taxon>Mycobacteriales</taxon>
        <taxon>Mycobacteriaceae</taxon>
        <taxon>Mycolicibacterium</taxon>
    </lineage>
</organism>
<feature type="chain" id="PRO_0000394332" description="Lysylphosphatidylglycerol biosynthesis bifunctional protein LysX">
    <location>
        <begin position="1"/>
        <end position="1100"/>
    </location>
</feature>
<feature type="transmembrane region" description="Helical" evidence="2">
    <location>
        <begin position="18"/>
        <end position="38"/>
    </location>
</feature>
<feature type="transmembrane region" description="Helical" evidence="2">
    <location>
        <begin position="60"/>
        <end position="80"/>
    </location>
</feature>
<feature type="transmembrane region" description="Helical" evidence="2">
    <location>
        <begin position="84"/>
        <end position="104"/>
    </location>
</feature>
<feature type="transmembrane region" description="Helical" evidence="2">
    <location>
        <begin position="112"/>
        <end position="132"/>
    </location>
</feature>
<feature type="transmembrane region" description="Helical" evidence="2">
    <location>
        <begin position="154"/>
        <end position="174"/>
    </location>
</feature>
<feature type="transmembrane region" description="Helical" evidence="2">
    <location>
        <begin position="206"/>
        <end position="226"/>
    </location>
</feature>
<feature type="transmembrane region" description="Helical" evidence="2">
    <location>
        <begin position="314"/>
        <end position="332"/>
    </location>
</feature>
<feature type="DNA-binding region" description="OB">
    <location>
        <begin position="661"/>
        <end position="739"/>
    </location>
</feature>
<feature type="region of interest" description="Phosphatidylglycerol lysyltransferase">
    <location>
        <begin position="1"/>
        <end position="601"/>
    </location>
</feature>
<feature type="region of interest" description="Lysine--tRNA ligase">
    <location>
        <begin position="602"/>
        <end position="1100"/>
    </location>
</feature>
<feature type="binding site" evidence="1">
    <location>
        <position position="1012"/>
    </location>
    <ligand>
        <name>Mg(2+)</name>
        <dbReference type="ChEBI" id="CHEBI:18420"/>
        <label>1</label>
    </ligand>
</feature>
<feature type="binding site" evidence="1">
    <location>
        <position position="1019"/>
    </location>
    <ligand>
        <name>Mg(2+)</name>
        <dbReference type="ChEBI" id="CHEBI:18420"/>
        <label>1</label>
    </ligand>
</feature>
<feature type="binding site" evidence="1">
    <location>
        <position position="1019"/>
    </location>
    <ligand>
        <name>Mg(2+)</name>
        <dbReference type="ChEBI" id="CHEBI:18420"/>
        <label>2</label>
    </ligand>
</feature>
<sequence>MTPTSLARARPTSSHRWVPAAAGWIVGVIATLSLLASVSPLVRSLIRVPREWVDDYIFNFPDTSFAWAFVLALLAAALAARKRIAWWILVGYMIAAAGWNIAGLAEGRERWFAEVGEVIGLAFHLAAIAFLLLARKEFWARVRRGALLKAAATLVASMAVGTLIGWGLLELFPGSLARSDRFLYALNRVSAFAGADAASFSGHPHVFVNALLGLFGAVALMVTAIVLFQSQRADNALTGEDESAIRGLLELYGKNDSLGYFATRRDKAVVFAPSGRAAITYRVEVGVCLASGDPVGDPRSWPQAIDAWLKLCQAYGWAPGVMGASAAGAQAFREAGLNALQLGDEAILHPEDFRLSGPDMRAVRQAVTRARRAGATVRIRRHRELPADEMAAVIERADAWRDTDDERGFSMALGRLGDPADGDCLLVEAVQADQVVAMLSLVPWGGNGVSLDLMRRSPQSPNGTIELMVSELCMQSEDIGITRISLNFAMFRSAFEQGAQLGAGPVARLWRWLLVFFSRWWQLETLYRSNMKYQPEWVPRYACYDDARLVPRVGVASVIAEGFLVLPFSRRHEQPHTGHHIAAPGTLVATGLLHSDGTAPDGMGLQADLADDDQPRLPEQVRVRMAKLKALQAQGVDAYPVANPPSHTVAQALAAEDGADVAVAGRVLRSRDYGGVLFAQLRDWSGETQLVLDNSLLADGSTADFTRTIDLGDLIEVTGTMGRSRSGKWSLLVSGWRLIGKCLRPLPDKWKGLTDQEARVRARYVDLAVNTDARELIRARSAVLHAIRETLVAKDFLEVETPILQQIHGGANARPFLTHINAYDLDLYLRIAPELYLKRLCVGGVERVFELGRAFRNEGVDFSHNPEFTLLEAYQAHADYHVWIDGCRELIQNAAQAANGAQVFMRPRADGVLEPVDISGPWTVKTVHGAVSEALGEQIGPDTDLATLRLLCDRAGIPYLTHWDAGAVVLELYEHLVEDQTREPTFYKDFPTSVSPLTRPHRSIPGVAERWDLVAWGVELGTAYSELTDPVEQRRRLQEQSLLAAGGDPEAMELDEDFLQAMEYAMPPTGGLGMGVDRVVMLITGRSIRETLPFPLAKPR</sequence>
<keyword id="KW-0030">Aminoacyl-tRNA synthetase</keyword>
<keyword id="KW-0046">Antibiotic resistance</keyword>
<keyword id="KW-0067">ATP-binding</keyword>
<keyword id="KW-1003">Cell membrane</keyword>
<keyword id="KW-0238">DNA-binding</keyword>
<keyword id="KW-0436">Ligase</keyword>
<keyword id="KW-0443">Lipid metabolism</keyword>
<keyword id="KW-0460">Magnesium</keyword>
<keyword id="KW-0472">Membrane</keyword>
<keyword id="KW-0479">Metal-binding</keyword>
<keyword id="KW-0511">Multifunctional enzyme</keyword>
<keyword id="KW-0547">Nucleotide-binding</keyword>
<keyword id="KW-0808">Transferase</keyword>
<keyword id="KW-0812">Transmembrane</keyword>
<keyword id="KW-1133">Transmembrane helix</keyword>
<proteinExistence type="inferred from homology"/>
<gene>
    <name type="primary">lysX</name>
    <name type="ordered locus">Mvan_3330</name>
</gene>
<evidence type="ECO:0000250" key="1"/>
<evidence type="ECO:0000255" key="2"/>
<evidence type="ECO:0000305" key="3"/>
<protein>
    <recommendedName>
        <fullName>Lysylphosphatidylglycerol biosynthesis bifunctional protein LysX</fullName>
    </recommendedName>
    <domain>
        <recommendedName>
            <fullName>Lysine--tRNA ligase</fullName>
            <ecNumber>6.1.1.6</ecNumber>
        </recommendedName>
        <alternativeName>
            <fullName>Lysyl-tRNA synthetase</fullName>
            <shortName>LysRS</shortName>
        </alternativeName>
    </domain>
    <domain>
        <recommendedName>
            <fullName>Phosphatidylglycerol lysyltransferase</fullName>
            <ecNumber>2.3.2.3</ecNumber>
        </recommendedName>
        <alternativeName>
            <fullName>Lysylphosphatidylglycerol synthetase</fullName>
            <shortName>LPG synthetase</shortName>
        </alternativeName>
    </domain>
</protein>